<proteinExistence type="inferred from homology"/>
<reference key="1">
    <citation type="submission" date="2006-12" db="EMBL/GenBank/DDBJ databases">
        <title>Complete sequence of Mycobacterium vanbaalenii PYR-1.</title>
        <authorList>
            <consortium name="US DOE Joint Genome Institute"/>
            <person name="Copeland A."/>
            <person name="Lucas S."/>
            <person name="Lapidus A."/>
            <person name="Barry K."/>
            <person name="Detter J.C."/>
            <person name="Glavina del Rio T."/>
            <person name="Hammon N."/>
            <person name="Israni S."/>
            <person name="Dalin E."/>
            <person name="Tice H."/>
            <person name="Pitluck S."/>
            <person name="Singan V."/>
            <person name="Schmutz J."/>
            <person name="Larimer F."/>
            <person name="Land M."/>
            <person name="Hauser L."/>
            <person name="Kyrpides N."/>
            <person name="Anderson I.J."/>
            <person name="Miller C."/>
            <person name="Richardson P."/>
        </authorList>
    </citation>
    <scope>NUCLEOTIDE SEQUENCE [LARGE SCALE GENOMIC DNA]</scope>
    <source>
        <strain>DSM 7251 / JCM 13017 / BCRC 16820 / KCTC 9966 / NRRL B-24157 / PYR-1</strain>
    </source>
</reference>
<organism>
    <name type="scientific">Mycolicibacterium vanbaalenii (strain DSM 7251 / JCM 13017 / BCRC 16820 / KCTC 9966 / NRRL B-24157 / PYR-1)</name>
    <name type="common">Mycobacterium vanbaalenii</name>
    <dbReference type="NCBI Taxonomy" id="350058"/>
    <lineage>
        <taxon>Bacteria</taxon>
        <taxon>Bacillati</taxon>
        <taxon>Actinomycetota</taxon>
        <taxon>Actinomycetes</taxon>
        <taxon>Mycobacteriales</taxon>
        <taxon>Mycobacteriaceae</taxon>
        <taxon>Mycolicibacterium</taxon>
    </lineage>
</organism>
<keyword id="KW-0963">Cytoplasm</keyword>
<keyword id="KW-0251">Elongation factor</keyword>
<keyword id="KW-0342">GTP-binding</keyword>
<keyword id="KW-0547">Nucleotide-binding</keyword>
<keyword id="KW-0648">Protein biosynthesis</keyword>
<protein>
    <recommendedName>
        <fullName evidence="1">Elongation factor G</fullName>
        <shortName evidence="1">EF-G</shortName>
    </recommendedName>
</protein>
<accession>A1T4L5</accession>
<dbReference type="EMBL" id="CP000511">
    <property type="protein sequence ID" value="ABM12115.1"/>
    <property type="molecule type" value="Genomic_DNA"/>
</dbReference>
<dbReference type="SMR" id="A1T4L5"/>
<dbReference type="STRING" id="350058.Mvan_1281"/>
<dbReference type="KEGG" id="mva:Mvan_1281"/>
<dbReference type="eggNOG" id="COG0480">
    <property type="taxonomic scope" value="Bacteria"/>
</dbReference>
<dbReference type="HOGENOM" id="CLU_002794_4_1_11"/>
<dbReference type="Proteomes" id="UP000009159">
    <property type="component" value="Chromosome"/>
</dbReference>
<dbReference type="GO" id="GO:0005737">
    <property type="term" value="C:cytoplasm"/>
    <property type="evidence" value="ECO:0007669"/>
    <property type="project" value="UniProtKB-SubCell"/>
</dbReference>
<dbReference type="GO" id="GO:0005525">
    <property type="term" value="F:GTP binding"/>
    <property type="evidence" value="ECO:0007669"/>
    <property type="project" value="UniProtKB-UniRule"/>
</dbReference>
<dbReference type="GO" id="GO:0003924">
    <property type="term" value="F:GTPase activity"/>
    <property type="evidence" value="ECO:0007669"/>
    <property type="project" value="InterPro"/>
</dbReference>
<dbReference type="GO" id="GO:0003746">
    <property type="term" value="F:translation elongation factor activity"/>
    <property type="evidence" value="ECO:0007669"/>
    <property type="project" value="UniProtKB-UniRule"/>
</dbReference>
<dbReference type="GO" id="GO:0032790">
    <property type="term" value="P:ribosome disassembly"/>
    <property type="evidence" value="ECO:0007669"/>
    <property type="project" value="TreeGrafter"/>
</dbReference>
<dbReference type="CDD" id="cd01886">
    <property type="entry name" value="EF-G"/>
    <property type="match status" value="1"/>
</dbReference>
<dbReference type="CDD" id="cd16262">
    <property type="entry name" value="EFG_III"/>
    <property type="match status" value="1"/>
</dbReference>
<dbReference type="CDD" id="cd01434">
    <property type="entry name" value="EFG_mtEFG1_IV"/>
    <property type="match status" value="1"/>
</dbReference>
<dbReference type="CDD" id="cd03713">
    <property type="entry name" value="EFG_mtEFG_C"/>
    <property type="match status" value="1"/>
</dbReference>
<dbReference type="CDD" id="cd04088">
    <property type="entry name" value="EFG_mtEFG_II"/>
    <property type="match status" value="1"/>
</dbReference>
<dbReference type="FunFam" id="2.40.30.10:FF:000006">
    <property type="entry name" value="Elongation factor G"/>
    <property type="match status" value="1"/>
</dbReference>
<dbReference type="FunFam" id="3.30.230.10:FF:000003">
    <property type="entry name" value="Elongation factor G"/>
    <property type="match status" value="1"/>
</dbReference>
<dbReference type="FunFam" id="3.30.70.240:FF:000001">
    <property type="entry name" value="Elongation factor G"/>
    <property type="match status" value="1"/>
</dbReference>
<dbReference type="FunFam" id="3.30.70.870:FF:000001">
    <property type="entry name" value="Elongation factor G"/>
    <property type="match status" value="1"/>
</dbReference>
<dbReference type="FunFam" id="3.40.50.300:FF:000029">
    <property type="entry name" value="Elongation factor G"/>
    <property type="match status" value="1"/>
</dbReference>
<dbReference type="Gene3D" id="3.30.230.10">
    <property type="match status" value="1"/>
</dbReference>
<dbReference type="Gene3D" id="3.30.70.240">
    <property type="match status" value="1"/>
</dbReference>
<dbReference type="Gene3D" id="3.30.70.870">
    <property type="entry name" value="Elongation Factor G (Translational Gtpase), domain 3"/>
    <property type="match status" value="1"/>
</dbReference>
<dbReference type="Gene3D" id="3.40.50.300">
    <property type="entry name" value="P-loop containing nucleotide triphosphate hydrolases"/>
    <property type="match status" value="1"/>
</dbReference>
<dbReference type="Gene3D" id="2.40.30.10">
    <property type="entry name" value="Translation factors"/>
    <property type="match status" value="1"/>
</dbReference>
<dbReference type="HAMAP" id="MF_00054_B">
    <property type="entry name" value="EF_G_EF_2_B"/>
    <property type="match status" value="1"/>
</dbReference>
<dbReference type="InterPro" id="IPR041095">
    <property type="entry name" value="EFG_II"/>
</dbReference>
<dbReference type="InterPro" id="IPR009022">
    <property type="entry name" value="EFG_III"/>
</dbReference>
<dbReference type="InterPro" id="IPR035647">
    <property type="entry name" value="EFG_III/V"/>
</dbReference>
<dbReference type="InterPro" id="IPR047872">
    <property type="entry name" value="EFG_IV"/>
</dbReference>
<dbReference type="InterPro" id="IPR035649">
    <property type="entry name" value="EFG_V"/>
</dbReference>
<dbReference type="InterPro" id="IPR000640">
    <property type="entry name" value="EFG_V-like"/>
</dbReference>
<dbReference type="InterPro" id="IPR004161">
    <property type="entry name" value="EFTu-like_2"/>
</dbReference>
<dbReference type="InterPro" id="IPR031157">
    <property type="entry name" value="G_TR_CS"/>
</dbReference>
<dbReference type="InterPro" id="IPR027417">
    <property type="entry name" value="P-loop_NTPase"/>
</dbReference>
<dbReference type="InterPro" id="IPR020568">
    <property type="entry name" value="Ribosomal_Su5_D2-typ_SF"/>
</dbReference>
<dbReference type="InterPro" id="IPR014721">
    <property type="entry name" value="Ribsml_uS5_D2-typ_fold_subgr"/>
</dbReference>
<dbReference type="InterPro" id="IPR005225">
    <property type="entry name" value="Small_GTP-bd"/>
</dbReference>
<dbReference type="InterPro" id="IPR000795">
    <property type="entry name" value="T_Tr_GTP-bd_dom"/>
</dbReference>
<dbReference type="InterPro" id="IPR009000">
    <property type="entry name" value="Transl_B-barrel_sf"/>
</dbReference>
<dbReference type="InterPro" id="IPR004540">
    <property type="entry name" value="Transl_elong_EFG/EF2"/>
</dbReference>
<dbReference type="InterPro" id="IPR005517">
    <property type="entry name" value="Transl_elong_EFG/EF2_IV"/>
</dbReference>
<dbReference type="NCBIfam" id="TIGR00484">
    <property type="entry name" value="EF-G"/>
    <property type="match status" value="1"/>
</dbReference>
<dbReference type="NCBIfam" id="NF009379">
    <property type="entry name" value="PRK12740.1-3"/>
    <property type="match status" value="1"/>
</dbReference>
<dbReference type="NCBIfam" id="NF009381">
    <property type="entry name" value="PRK12740.1-5"/>
    <property type="match status" value="1"/>
</dbReference>
<dbReference type="NCBIfam" id="TIGR00231">
    <property type="entry name" value="small_GTP"/>
    <property type="match status" value="1"/>
</dbReference>
<dbReference type="PANTHER" id="PTHR43261:SF1">
    <property type="entry name" value="RIBOSOME-RELEASING FACTOR 2, MITOCHONDRIAL"/>
    <property type="match status" value="1"/>
</dbReference>
<dbReference type="PANTHER" id="PTHR43261">
    <property type="entry name" value="TRANSLATION ELONGATION FACTOR G-RELATED"/>
    <property type="match status" value="1"/>
</dbReference>
<dbReference type="Pfam" id="PF00679">
    <property type="entry name" value="EFG_C"/>
    <property type="match status" value="1"/>
</dbReference>
<dbReference type="Pfam" id="PF14492">
    <property type="entry name" value="EFG_III"/>
    <property type="match status" value="1"/>
</dbReference>
<dbReference type="Pfam" id="PF03764">
    <property type="entry name" value="EFG_IV"/>
    <property type="match status" value="1"/>
</dbReference>
<dbReference type="Pfam" id="PF00009">
    <property type="entry name" value="GTP_EFTU"/>
    <property type="match status" value="1"/>
</dbReference>
<dbReference type="Pfam" id="PF03144">
    <property type="entry name" value="GTP_EFTU_D2"/>
    <property type="match status" value="1"/>
</dbReference>
<dbReference type="PRINTS" id="PR00315">
    <property type="entry name" value="ELONGATNFCT"/>
</dbReference>
<dbReference type="SMART" id="SM00838">
    <property type="entry name" value="EFG_C"/>
    <property type="match status" value="1"/>
</dbReference>
<dbReference type="SMART" id="SM00889">
    <property type="entry name" value="EFG_IV"/>
    <property type="match status" value="1"/>
</dbReference>
<dbReference type="SUPFAM" id="SSF54980">
    <property type="entry name" value="EF-G C-terminal domain-like"/>
    <property type="match status" value="2"/>
</dbReference>
<dbReference type="SUPFAM" id="SSF52540">
    <property type="entry name" value="P-loop containing nucleoside triphosphate hydrolases"/>
    <property type="match status" value="1"/>
</dbReference>
<dbReference type="SUPFAM" id="SSF54211">
    <property type="entry name" value="Ribosomal protein S5 domain 2-like"/>
    <property type="match status" value="1"/>
</dbReference>
<dbReference type="SUPFAM" id="SSF50447">
    <property type="entry name" value="Translation proteins"/>
    <property type="match status" value="1"/>
</dbReference>
<dbReference type="PROSITE" id="PS00301">
    <property type="entry name" value="G_TR_1"/>
    <property type="match status" value="1"/>
</dbReference>
<dbReference type="PROSITE" id="PS51722">
    <property type="entry name" value="G_TR_2"/>
    <property type="match status" value="1"/>
</dbReference>
<sequence length="700" mass="77013">MAQDVLTDLTKVRNIGIMAHIDAGKTTTTERILFYTGISYKIGEVHDGAATMDWMEQEQERGITITSAATTCFWNDNQINIIDTPGHVDFTVEVERSLRVLDGAVAVFDGKEGVEPQSEQVWRQADKYDVPRICFVNKMDKLGADFYFSVQTMKDRLGANVVPIQLPIGSEGDFEGVVDLVEMKAKVWRGETKLGEKYDTVEIPADLQEKAEEYRTAMIEAVAETDDELMEKYLGGEELTIEEIKSGLRKLTITSAGYPVLCGSAFKNKGVQPMLDAVIDYLPNPLDVPAAEGHVPGKEDEIISRKPSADEPFSGLAFKVATHPFFGKLTYVRVYSGKVDSGSQVVNSTKGKKERLGKLFQMHSNKENPVESASAGHIYAVIGLKDTTTGDTLCDPNQQIVLESMTFPDPVIEVAIEPKTKSDQEKLGTAIQKLAEEDPTFKVHLDQETGQTVIGGMGELHLDILVDRMRREFKVEANVGKPQVAYRETIRRKVEKVEYTHKKQTGGSGQFAKVLIDLEPFTGEDGATYEFENKVTGGRIPREYIPSVDAGAQDAMQYGVLAGYPLVNVKVTLLDGAFHEVDSSEMAFKVAGSQVLKKAAQSAQPVILEPIMAVEVTTPEDYMGDVIGDLNSRRGQIQAMEERSGARVVKAQVPLSEMFGYVGDLRSKTQGRANYSMVFDSYAEVPANVSKEIIAKATGQ</sequence>
<gene>
    <name evidence="1" type="primary">fusA</name>
    <name type="ordered locus">Mvan_1281</name>
</gene>
<comment type="function">
    <text evidence="1">Catalyzes the GTP-dependent ribosomal translocation step during translation elongation. During this step, the ribosome changes from the pre-translocational (PRE) to the post-translocational (POST) state as the newly formed A-site-bound peptidyl-tRNA and P-site-bound deacylated tRNA move to the P and E sites, respectively. Catalyzes the coordinated movement of the two tRNA molecules, the mRNA and conformational changes in the ribosome.</text>
</comment>
<comment type="subcellular location">
    <subcellularLocation>
        <location evidence="1">Cytoplasm</location>
    </subcellularLocation>
</comment>
<comment type="similarity">
    <text evidence="1">Belongs to the TRAFAC class translation factor GTPase superfamily. Classic translation factor GTPase family. EF-G/EF-2 subfamily.</text>
</comment>
<name>EFG_MYCVP</name>
<feature type="chain" id="PRO_0000335849" description="Elongation factor G">
    <location>
        <begin position="1"/>
        <end position="700"/>
    </location>
</feature>
<feature type="domain" description="tr-type G">
    <location>
        <begin position="10"/>
        <end position="286"/>
    </location>
</feature>
<feature type="binding site" evidence="1">
    <location>
        <begin position="19"/>
        <end position="26"/>
    </location>
    <ligand>
        <name>GTP</name>
        <dbReference type="ChEBI" id="CHEBI:37565"/>
    </ligand>
</feature>
<feature type="binding site" evidence="1">
    <location>
        <begin position="83"/>
        <end position="87"/>
    </location>
    <ligand>
        <name>GTP</name>
        <dbReference type="ChEBI" id="CHEBI:37565"/>
    </ligand>
</feature>
<feature type="binding site" evidence="1">
    <location>
        <begin position="137"/>
        <end position="140"/>
    </location>
    <ligand>
        <name>GTP</name>
        <dbReference type="ChEBI" id="CHEBI:37565"/>
    </ligand>
</feature>
<evidence type="ECO:0000255" key="1">
    <source>
        <dbReference type="HAMAP-Rule" id="MF_00054"/>
    </source>
</evidence>